<evidence type="ECO:0000255" key="1">
    <source>
        <dbReference type="HAMAP-Rule" id="MF_01220"/>
    </source>
</evidence>
<keyword id="KW-0067">ATP-binding</keyword>
<keyword id="KW-0963">Cytoplasm</keyword>
<keyword id="KW-0418">Kinase</keyword>
<keyword id="KW-0547">Nucleotide-binding</keyword>
<keyword id="KW-0665">Pyrimidine biosynthesis</keyword>
<keyword id="KW-0808">Transferase</keyword>
<accession>P59002</accession>
<feature type="chain" id="PRO_0000143830" description="Uridylate kinase">
    <location>
        <begin position="1"/>
        <end position="240"/>
    </location>
</feature>
<feature type="binding site" evidence="1">
    <location>
        <begin position="15"/>
        <end position="18"/>
    </location>
    <ligand>
        <name>ATP</name>
        <dbReference type="ChEBI" id="CHEBI:30616"/>
    </ligand>
</feature>
<feature type="binding site" evidence="1">
    <location>
        <position position="58"/>
    </location>
    <ligand>
        <name>ATP</name>
        <dbReference type="ChEBI" id="CHEBI:30616"/>
    </ligand>
</feature>
<feature type="binding site" evidence="1">
    <location>
        <position position="62"/>
    </location>
    <ligand>
        <name>ATP</name>
        <dbReference type="ChEBI" id="CHEBI:30616"/>
    </ligand>
</feature>
<feature type="binding site" evidence="1">
    <location>
        <position position="77"/>
    </location>
    <ligand>
        <name>UMP</name>
        <dbReference type="ChEBI" id="CHEBI:57865"/>
    </ligand>
</feature>
<feature type="binding site" evidence="1">
    <location>
        <begin position="138"/>
        <end position="145"/>
    </location>
    <ligand>
        <name>UMP</name>
        <dbReference type="ChEBI" id="CHEBI:57865"/>
    </ligand>
</feature>
<feature type="binding site" evidence="1">
    <location>
        <position position="165"/>
    </location>
    <ligand>
        <name>ATP</name>
        <dbReference type="ChEBI" id="CHEBI:30616"/>
    </ligand>
</feature>
<feature type="binding site" evidence="1">
    <location>
        <position position="171"/>
    </location>
    <ligand>
        <name>ATP</name>
        <dbReference type="ChEBI" id="CHEBI:30616"/>
    </ligand>
</feature>
<feature type="binding site" evidence="1">
    <location>
        <position position="174"/>
    </location>
    <ligand>
        <name>ATP</name>
        <dbReference type="ChEBI" id="CHEBI:30616"/>
    </ligand>
</feature>
<proteinExistence type="inferred from homology"/>
<name>PYRH_BUCAP</name>
<protein>
    <recommendedName>
        <fullName evidence="1">Uridylate kinase</fullName>
        <shortName evidence="1">UK</shortName>
        <ecNumber evidence="1">2.7.4.22</ecNumber>
    </recommendedName>
    <alternativeName>
        <fullName evidence="1">Uridine monophosphate kinase</fullName>
        <shortName evidence="1">UMP kinase</shortName>
        <shortName evidence="1">UMPK</shortName>
    </alternativeName>
</protein>
<organism>
    <name type="scientific">Buchnera aphidicola subsp. Schizaphis graminum (strain Sg)</name>
    <dbReference type="NCBI Taxonomy" id="198804"/>
    <lineage>
        <taxon>Bacteria</taxon>
        <taxon>Pseudomonadati</taxon>
        <taxon>Pseudomonadota</taxon>
        <taxon>Gammaproteobacteria</taxon>
        <taxon>Enterobacterales</taxon>
        <taxon>Erwiniaceae</taxon>
        <taxon>Buchnera</taxon>
    </lineage>
</organism>
<dbReference type="EC" id="2.7.4.22" evidence="1"/>
<dbReference type="EMBL" id="AE013218">
    <property type="protein sequence ID" value="AAM67786.1"/>
    <property type="molecule type" value="Genomic_DNA"/>
</dbReference>
<dbReference type="RefSeq" id="WP_011053753.1">
    <property type="nucleotide sequence ID" value="NC_004061.1"/>
</dbReference>
<dbReference type="SMR" id="P59002"/>
<dbReference type="STRING" id="198804.BUsg_227"/>
<dbReference type="GeneID" id="93003693"/>
<dbReference type="KEGG" id="bas:BUsg_227"/>
<dbReference type="eggNOG" id="COG0528">
    <property type="taxonomic scope" value="Bacteria"/>
</dbReference>
<dbReference type="HOGENOM" id="CLU_033861_0_0_6"/>
<dbReference type="UniPathway" id="UPA00159">
    <property type="reaction ID" value="UER00275"/>
</dbReference>
<dbReference type="Proteomes" id="UP000000416">
    <property type="component" value="Chromosome"/>
</dbReference>
<dbReference type="GO" id="GO:0005829">
    <property type="term" value="C:cytosol"/>
    <property type="evidence" value="ECO:0007669"/>
    <property type="project" value="TreeGrafter"/>
</dbReference>
<dbReference type="GO" id="GO:0005524">
    <property type="term" value="F:ATP binding"/>
    <property type="evidence" value="ECO:0007669"/>
    <property type="project" value="UniProtKB-KW"/>
</dbReference>
<dbReference type="GO" id="GO:0033862">
    <property type="term" value="F:UMP kinase activity"/>
    <property type="evidence" value="ECO:0007669"/>
    <property type="project" value="UniProtKB-EC"/>
</dbReference>
<dbReference type="GO" id="GO:0044210">
    <property type="term" value="P:'de novo' CTP biosynthetic process"/>
    <property type="evidence" value="ECO:0007669"/>
    <property type="project" value="UniProtKB-UniRule"/>
</dbReference>
<dbReference type="GO" id="GO:0006225">
    <property type="term" value="P:UDP biosynthetic process"/>
    <property type="evidence" value="ECO:0007669"/>
    <property type="project" value="TreeGrafter"/>
</dbReference>
<dbReference type="CDD" id="cd04254">
    <property type="entry name" value="AAK_UMPK-PyrH-Ec"/>
    <property type="match status" value="1"/>
</dbReference>
<dbReference type="FunFam" id="3.40.1160.10:FF:000001">
    <property type="entry name" value="Uridylate kinase"/>
    <property type="match status" value="1"/>
</dbReference>
<dbReference type="Gene3D" id="3.40.1160.10">
    <property type="entry name" value="Acetylglutamate kinase-like"/>
    <property type="match status" value="1"/>
</dbReference>
<dbReference type="HAMAP" id="MF_01220_B">
    <property type="entry name" value="PyrH_B"/>
    <property type="match status" value="1"/>
</dbReference>
<dbReference type="InterPro" id="IPR036393">
    <property type="entry name" value="AceGlu_kinase-like_sf"/>
</dbReference>
<dbReference type="InterPro" id="IPR001048">
    <property type="entry name" value="Asp/Glu/Uridylate_kinase"/>
</dbReference>
<dbReference type="InterPro" id="IPR011817">
    <property type="entry name" value="Uridylate_kinase"/>
</dbReference>
<dbReference type="InterPro" id="IPR015963">
    <property type="entry name" value="Uridylate_kinase_bac"/>
</dbReference>
<dbReference type="NCBIfam" id="TIGR02075">
    <property type="entry name" value="pyrH_bact"/>
    <property type="match status" value="1"/>
</dbReference>
<dbReference type="PANTHER" id="PTHR42833">
    <property type="entry name" value="URIDYLATE KINASE"/>
    <property type="match status" value="1"/>
</dbReference>
<dbReference type="PANTHER" id="PTHR42833:SF4">
    <property type="entry name" value="URIDYLATE KINASE PUMPKIN, CHLOROPLASTIC"/>
    <property type="match status" value="1"/>
</dbReference>
<dbReference type="Pfam" id="PF00696">
    <property type="entry name" value="AA_kinase"/>
    <property type="match status" value="1"/>
</dbReference>
<dbReference type="PIRSF" id="PIRSF005650">
    <property type="entry name" value="Uridylate_kin"/>
    <property type="match status" value="1"/>
</dbReference>
<dbReference type="SUPFAM" id="SSF53633">
    <property type="entry name" value="Carbamate kinase-like"/>
    <property type="match status" value="1"/>
</dbReference>
<sequence length="240" mass="26720">MSTNTKFIYHRILLKISGEVLQGVNKFGIDINSLKRIVKEIKLVLQFGIQVGLVIGSGNLFRGATLSQLGVNRIVSDHIGILSTIINSLAMKDIMNSYSIPSYVMSSIPVDGICETYNYERAIDLLSNNFVVIFAAGTGNPLFTTDSAACLRGIEIKSDIILKGTKVDGVYSKDPKKYSQAVFYKRLTYKDVIQKELKVMDLSAFSLARDHNLPIRVFNINKPKSLYRIVKGYDEGTLIK</sequence>
<reference key="1">
    <citation type="journal article" date="2002" name="Science">
        <title>50 million years of genomic stasis in endosymbiotic bacteria.</title>
        <authorList>
            <person name="Tamas I."/>
            <person name="Klasson L."/>
            <person name="Canbaeck B."/>
            <person name="Naeslund A.K."/>
            <person name="Eriksson A.-S."/>
            <person name="Wernegreen J.J."/>
            <person name="Sandstroem J.P."/>
            <person name="Moran N.A."/>
            <person name="Andersson S.G.E."/>
        </authorList>
    </citation>
    <scope>NUCLEOTIDE SEQUENCE [LARGE SCALE GENOMIC DNA]</scope>
    <source>
        <strain>Sg</strain>
    </source>
</reference>
<comment type="function">
    <text evidence="1">Catalyzes the reversible phosphorylation of UMP to UDP.</text>
</comment>
<comment type="catalytic activity">
    <reaction evidence="1">
        <text>UMP + ATP = UDP + ADP</text>
        <dbReference type="Rhea" id="RHEA:24400"/>
        <dbReference type="ChEBI" id="CHEBI:30616"/>
        <dbReference type="ChEBI" id="CHEBI:57865"/>
        <dbReference type="ChEBI" id="CHEBI:58223"/>
        <dbReference type="ChEBI" id="CHEBI:456216"/>
        <dbReference type="EC" id="2.7.4.22"/>
    </reaction>
</comment>
<comment type="activity regulation">
    <text evidence="1">Inhibited by UTP.</text>
</comment>
<comment type="pathway">
    <text evidence="1">Pyrimidine metabolism; CTP biosynthesis via de novo pathway; UDP from UMP (UMPK route): step 1/1.</text>
</comment>
<comment type="subunit">
    <text evidence="1">Homohexamer.</text>
</comment>
<comment type="subcellular location">
    <subcellularLocation>
        <location evidence="1">Cytoplasm</location>
    </subcellularLocation>
</comment>
<comment type="similarity">
    <text evidence="1">Belongs to the UMP kinase family.</text>
</comment>
<gene>
    <name evidence="1" type="primary">pyrH</name>
    <name type="ordered locus">BUsg_227</name>
</gene>